<feature type="chain" id="PRO_0000410847" description="Octanoyltransferase LipM">
    <location>
        <begin position="1"/>
        <end position="278"/>
    </location>
</feature>
<feature type="domain" description="BPL/LPL catalytic" evidence="2">
    <location>
        <begin position="33"/>
        <end position="248"/>
    </location>
</feature>
<feature type="active site" description="Acyl-thioester intermediate" evidence="1">
    <location>
        <position position="150"/>
    </location>
</feature>
<feature type="site" description="Lowers pKa of active site Cys" evidence="1">
    <location>
        <position position="165"/>
    </location>
</feature>
<organism>
    <name type="scientific">Anoxybacillus flavithermus (strain DSM 21510 / WK1)</name>
    <dbReference type="NCBI Taxonomy" id="491915"/>
    <lineage>
        <taxon>Bacteria</taxon>
        <taxon>Bacillati</taxon>
        <taxon>Bacillota</taxon>
        <taxon>Bacilli</taxon>
        <taxon>Bacillales</taxon>
        <taxon>Anoxybacillaceae</taxon>
        <taxon>Anoxybacillus</taxon>
    </lineage>
</organism>
<name>LIPM_ANOFW</name>
<sequence>MEKEVWRFIDSGNCSPAFNMALDEALLEWHSEGKIPPTIRFYGWNPPTLSIGYFQKVEKEIDMEAVKKYGLGFVRRPTGGRGVLHDQELTYSVIVSELHPAMPQTVTEAYRVISQGILEGFRFLGLDAYFAVPKTEEEKADLKNPRSAVCFDAPSWYELVVEGRKVAGSAQTRQKGVILQHGSILLHLDEDMLFSLFKYPNERVKERLRQNFKNKAVAINELTDRNITINEAKEAFFRGFEKGLNVQLERYELTDDELFYVQQLAKNKYETDEWNFKR</sequence>
<accession>B7GHD6</accession>
<gene>
    <name evidence="1" type="primary">lipM</name>
    <name type="ordered locus">Aflv_0919</name>
</gene>
<protein>
    <recommendedName>
        <fullName evidence="1">Octanoyltransferase LipM</fullName>
        <ecNumber evidence="1">2.3.1.181</ecNumber>
    </recommendedName>
    <alternativeName>
        <fullName evidence="1">Octanoyl-[acyl-carrier-protein]:[GcvH] N-octanoyltransferase</fullName>
    </alternativeName>
</protein>
<comment type="function">
    <text evidence="1">Catalyzes the transfer of endogenously produced octanoic acid from octanoyl-acyl-carrier-protein onto the lipoyl domain of GcvH, an intermediate carrier during protein lipoylation.</text>
</comment>
<comment type="catalytic activity">
    <reaction evidence="1">
        <text>octanoyl-[ACP] + L-lysyl-[protein] = N(6)-octanoyl-L-lysyl-[protein] + holo-[ACP] + H(+)</text>
        <dbReference type="Rhea" id="RHEA:17665"/>
        <dbReference type="Rhea" id="RHEA-COMP:9636"/>
        <dbReference type="Rhea" id="RHEA-COMP:9685"/>
        <dbReference type="Rhea" id="RHEA-COMP:9752"/>
        <dbReference type="Rhea" id="RHEA-COMP:9928"/>
        <dbReference type="ChEBI" id="CHEBI:15378"/>
        <dbReference type="ChEBI" id="CHEBI:29969"/>
        <dbReference type="ChEBI" id="CHEBI:64479"/>
        <dbReference type="ChEBI" id="CHEBI:78463"/>
        <dbReference type="ChEBI" id="CHEBI:78809"/>
        <dbReference type="EC" id="2.3.1.181"/>
    </reaction>
</comment>
<comment type="pathway">
    <text evidence="1">Protein modification; protein lipoylation via endogenous pathway; protein N(6)-(lipoyl)lysine from octanoyl-[acyl-carrier-protein].</text>
</comment>
<comment type="subunit">
    <text evidence="1">Monomer.</text>
</comment>
<comment type="miscellaneous">
    <text evidence="1">In the reaction, the free carboxyl group of octanoic acid is attached via an amide linkage to the epsilon-amino group of a specific lysine residue of lipoyl domains of lipoate-dependent enzymes. The reaction proceeds via an octanoyl-thioester enzyme intermediate.</text>
</comment>
<comment type="similarity">
    <text evidence="1">Belongs to the octanoyltransferase LipM family.</text>
</comment>
<keyword id="KW-0012">Acyltransferase</keyword>
<keyword id="KW-0808">Transferase</keyword>
<dbReference type="EC" id="2.3.1.181" evidence="1"/>
<dbReference type="EMBL" id="CP000922">
    <property type="protein sequence ID" value="ACJ33297.1"/>
    <property type="molecule type" value="Genomic_DNA"/>
</dbReference>
<dbReference type="RefSeq" id="WP_012574579.1">
    <property type="nucleotide sequence ID" value="NC_011567.1"/>
</dbReference>
<dbReference type="SMR" id="B7GHD6"/>
<dbReference type="STRING" id="491915.Aflv_0919"/>
<dbReference type="GeneID" id="7037177"/>
<dbReference type="KEGG" id="afl:Aflv_0919"/>
<dbReference type="PATRIC" id="fig|491915.6.peg.939"/>
<dbReference type="eggNOG" id="COG0095">
    <property type="taxonomic scope" value="Bacteria"/>
</dbReference>
<dbReference type="HOGENOM" id="CLU_022986_5_0_9"/>
<dbReference type="Proteomes" id="UP000000742">
    <property type="component" value="Chromosome"/>
</dbReference>
<dbReference type="GO" id="GO:0033819">
    <property type="term" value="F:lipoyl(octanoyl) transferase activity"/>
    <property type="evidence" value="ECO:0007669"/>
    <property type="project" value="UniProtKB-UniRule"/>
</dbReference>
<dbReference type="GO" id="GO:0009107">
    <property type="term" value="P:lipoate biosynthetic process"/>
    <property type="evidence" value="ECO:0007669"/>
    <property type="project" value="UniProtKB-UniRule"/>
</dbReference>
<dbReference type="GO" id="GO:0036211">
    <property type="term" value="P:protein modification process"/>
    <property type="evidence" value="ECO:0007669"/>
    <property type="project" value="InterPro"/>
</dbReference>
<dbReference type="CDD" id="cd16443">
    <property type="entry name" value="LplA"/>
    <property type="match status" value="1"/>
</dbReference>
<dbReference type="Gene3D" id="3.30.930.10">
    <property type="entry name" value="Bira Bifunctional Protein, Domain 2"/>
    <property type="match status" value="1"/>
</dbReference>
<dbReference type="HAMAP" id="MF_02118">
    <property type="entry name" value="LipM"/>
    <property type="match status" value="1"/>
</dbReference>
<dbReference type="InterPro" id="IPR045864">
    <property type="entry name" value="aa-tRNA-synth_II/BPL/LPL"/>
</dbReference>
<dbReference type="InterPro" id="IPR004143">
    <property type="entry name" value="BPL_LPL_catalytic"/>
</dbReference>
<dbReference type="InterPro" id="IPR024898">
    <property type="entry name" value="LipM"/>
</dbReference>
<dbReference type="InterPro" id="IPR050664">
    <property type="entry name" value="Octanoyltrans_LipM/LipL"/>
</dbReference>
<dbReference type="PANTHER" id="PTHR43679:SF2">
    <property type="entry name" value="OCTANOYL-[GCVH]:PROTEIN N-OCTANOYLTRANSFERASE"/>
    <property type="match status" value="1"/>
</dbReference>
<dbReference type="PANTHER" id="PTHR43679">
    <property type="entry name" value="OCTANOYLTRANSFERASE LIPM-RELATED"/>
    <property type="match status" value="1"/>
</dbReference>
<dbReference type="Pfam" id="PF21948">
    <property type="entry name" value="LplA-B_cat"/>
    <property type="match status" value="1"/>
</dbReference>
<dbReference type="SUPFAM" id="SSF55681">
    <property type="entry name" value="Class II aaRS and biotin synthetases"/>
    <property type="match status" value="1"/>
</dbReference>
<dbReference type="PROSITE" id="PS51733">
    <property type="entry name" value="BPL_LPL_CATALYTIC"/>
    <property type="match status" value="1"/>
</dbReference>
<evidence type="ECO:0000255" key="1">
    <source>
        <dbReference type="HAMAP-Rule" id="MF_02118"/>
    </source>
</evidence>
<evidence type="ECO:0000255" key="2">
    <source>
        <dbReference type="PROSITE-ProRule" id="PRU01067"/>
    </source>
</evidence>
<reference key="1">
    <citation type="journal article" date="2008" name="Genome Biol.">
        <title>Encapsulated in silica: genome, proteome and physiology of the thermophilic bacterium Anoxybacillus flavithermus WK1.</title>
        <authorList>
            <person name="Saw J.H."/>
            <person name="Mountain B.W."/>
            <person name="Feng L."/>
            <person name="Omelchenko M.V."/>
            <person name="Hou S."/>
            <person name="Saito J.A."/>
            <person name="Stott M.B."/>
            <person name="Li D."/>
            <person name="Zhao G."/>
            <person name="Wu J."/>
            <person name="Galperin M.Y."/>
            <person name="Koonin E.V."/>
            <person name="Makarova K.S."/>
            <person name="Wolf Y.I."/>
            <person name="Rigden D.J."/>
            <person name="Dunfield P.F."/>
            <person name="Wang L."/>
            <person name="Alam M."/>
        </authorList>
    </citation>
    <scope>NUCLEOTIDE SEQUENCE [LARGE SCALE GENOMIC DNA]</scope>
    <source>
        <strain>DSM 21510 / WK1</strain>
    </source>
</reference>
<proteinExistence type="inferred from homology"/>